<comment type="function">
    <text>Ligand for members of the frizzled family of seven transmembrane receptors. Probable developmental protein. May be a signaling molecule which affects the development of discrete regions of tissues. Is likely to signal over only few cell diameters.</text>
</comment>
<comment type="subcellular location">
    <subcellularLocation>
        <location>Secreted</location>
        <location>Extracellular space</location>
        <location>Extracellular matrix</location>
    </subcellularLocation>
</comment>
<comment type="PTM">
    <text evidence="1 3">Palmitoleoylation is required for efficient binding to frizzled receptors. Depalmitoleoylation leads to Wnt signaling pathway inhibition.</text>
</comment>
<comment type="similarity">
    <text evidence="5">Belongs to the Wnt family.</text>
</comment>
<organism>
    <name type="scientific">Eptatretus stoutii</name>
    <name type="common">Pacific hagfish</name>
    <dbReference type="NCBI Taxonomy" id="7765"/>
    <lineage>
        <taxon>Eukaryota</taxon>
        <taxon>Metazoa</taxon>
        <taxon>Chordata</taxon>
        <taxon>Craniata</taxon>
        <taxon>Vertebrata</taxon>
        <taxon>Cyclostomata</taxon>
        <taxon>Myxini</taxon>
        <taxon>Myxiniformes</taxon>
        <taxon>Myxinidae</taxon>
        <taxon>Eptatretinae</taxon>
        <taxon>Eptatretus</taxon>
    </lineage>
</organism>
<protein>
    <recommendedName>
        <fullName>Protein Wnt-7(I)</fullName>
    </recommendedName>
</protein>
<dbReference type="EMBL" id="M91269">
    <property type="protein sequence ID" value="AAA49250.1"/>
    <property type="molecule type" value="Genomic_DNA"/>
</dbReference>
<dbReference type="SMR" id="P28122"/>
<dbReference type="GlyCosmos" id="P28122">
    <property type="glycosylation" value="1 site, No reported glycans"/>
</dbReference>
<dbReference type="GO" id="GO:0005615">
    <property type="term" value="C:extracellular space"/>
    <property type="evidence" value="ECO:0007669"/>
    <property type="project" value="TreeGrafter"/>
</dbReference>
<dbReference type="GO" id="GO:0005125">
    <property type="term" value="F:cytokine activity"/>
    <property type="evidence" value="ECO:0007669"/>
    <property type="project" value="TreeGrafter"/>
</dbReference>
<dbReference type="GO" id="GO:0005109">
    <property type="term" value="F:frizzled binding"/>
    <property type="evidence" value="ECO:0007669"/>
    <property type="project" value="TreeGrafter"/>
</dbReference>
<dbReference type="GO" id="GO:0060070">
    <property type="term" value="P:canonical Wnt signaling pathway"/>
    <property type="evidence" value="ECO:0007669"/>
    <property type="project" value="TreeGrafter"/>
</dbReference>
<dbReference type="GO" id="GO:0045165">
    <property type="term" value="P:cell fate commitment"/>
    <property type="evidence" value="ECO:0007669"/>
    <property type="project" value="TreeGrafter"/>
</dbReference>
<dbReference type="GO" id="GO:0030182">
    <property type="term" value="P:neuron differentiation"/>
    <property type="evidence" value="ECO:0007669"/>
    <property type="project" value="TreeGrafter"/>
</dbReference>
<dbReference type="GO" id="GO:0046330">
    <property type="term" value="P:positive regulation of JNK cascade"/>
    <property type="evidence" value="ECO:0007669"/>
    <property type="project" value="TreeGrafter"/>
</dbReference>
<dbReference type="Gene3D" id="3.30.2460.20">
    <property type="match status" value="1"/>
</dbReference>
<dbReference type="InterPro" id="IPR005817">
    <property type="entry name" value="Wnt"/>
</dbReference>
<dbReference type="InterPro" id="IPR043158">
    <property type="entry name" value="Wnt_C"/>
</dbReference>
<dbReference type="PANTHER" id="PTHR12027:SF112">
    <property type="entry name" value="PROTEIN WNT-2"/>
    <property type="match status" value="1"/>
</dbReference>
<dbReference type="PANTHER" id="PTHR12027">
    <property type="entry name" value="WNT RELATED"/>
    <property type="match status" value="1"/>
</dbReference>
<dbReference type="Pfam" id="PF00110">
    <property type="entry name" value="wnt"/>
    <property type="match status" value="1"/>
</dbReference>
<dbReference type="SMART" id="SM00097">
    <property type="entry name" value="WNT1"/>
    <property type="match status" value="1"/>
</dbReference>
<keyword id="KW-0217">Developmental protein</keyword>
<keyword id="KW-1015">Disulfide bond</keyword>
<keyword id="KW-0272">Extracellular matrix</keyword>
<keyword id="KW-0325">Glycoprotein</keyword>
<keyword id="KW-0449">Lipoprotein</keyword>
<keyword id="KW-0964">Secreted</keyword>
<keyword id="KW-0879">Wnt signaling pathway</keyword>
<reference key="1">
    <citation type="journal article" date="1992" name="Proc. Natl. Acad. Sci. U.S.A.">
        <title>Diversification of the Wnt gene family on the ancestral lineage of vertebrates.</title>
        <authorList>
            <person name="Sidow A."/>
        </authorList>
    </citation>
    <scope>NUCLEOTIDE SEQUENCE [GENOMIC DNA]</scope>
</reference>
<sequence length="123" mass="14099">SGSCATKTCWMMLPKFREVGYALKDKYSEAEYVEPVRASRYRRPVFLKIKKSSTYRKPMDTDLVYIMNSPNYCEEDPVSGSVGTRGRLCNRTSPGAAGCDLMCCGRGYNTHQYKKMWQCNCKF</sequence>
<accession>P28122</accession>
<evidence type="ECO:0000250" key="1">
    <source>
        <dbReference type="UniProtKB" id="P27467"/>
    </source>
</evidence>
<evidence type="ECO:0000250" key="2">
    <source>
        <dbReference type="UniProtKB" id="P28026"/>
    </source>
</evidence>
<evidence type="ECO:0000250" key="3">
    <source>
        <dbReference type="UniProtKB" id="P56704"/>
    </source>
</evidence>
<evidence type="ECO:0000255" key="4"/>
<evidence type="ECO:0000305" key="5"/>
<proteinExistence type="inferred from homology"/>
<name>WNT71_EPTST</name>
<gene>
    <name type="primary">WNT-7(I)</name>
</gene>
<feature type="chain" id="PRO_0000200656" description="Protein Wnt-7(I)">
    <location>
        <begin position="1" status="less than"/>
        <end position="123" status="greater than"/>
    </location>
</feature>
<feature type="short sequence motif" description="Microbody targeting signal" evidence="4">
    <location>
        <begin position="121"/>
        <end position="123"/>
    </location>
</feature>
<feature type="lipid moiety-binding region" description="O-palmitoleoyl serine; by PORCN" evidence="3">
    <location>
        <position position="1"/>
    </location>
</feature>
<feature type="glycosylation site" description="N-linked (GlcNAc...) asparagine" evidence="4">
    <location>
        <position position="90"/>
    </location>
</feature>
<feature type="disulfide bond" evidence="2">
    <location>
        <begin position="89"/>
        <end position="104"/>
    </location>
</feature>
<feature type="non-terminal residue">
    <location>
        <position position="1"/>
    </location>
</feature>
<feature type="non-terminal residue">
    <location>
        <position position="123"/>
    </location>
</feature>